<sequence>MFDIGVNLTSSQFAKDRDDVVARAFAAGVKGMLLTGTNIHESQQALKLARRYPHCWSTAGVHPHDSSQWSPASEDAIIALANQPEVVAIGECGLDFNRNFSTPQEQERAFQAQLQIAAELQIPIFMHCRDAHERFLVLLDPWLDSLPGAILHCFTGSRQQMQACVDRGLYIGITGWVCDERRGLELRELLPFIPAEKLLIETDAPYLLPRDLTPKPTSRRNEPAYLPHILERIALWRGEDPQWLAAMTDANARTLFEVVF</sequence>
<keyword id="KW-0963">Cytoplasm</keyword>
<keyword id="KW-0269">Exonuclease</keyword>
<keyword id="KW-0378">Hydrolase</keyword>
<keyword id="KW-0460">Magnesium</keyword>
<keyword id="KW-0479">Metal-binding</keyword>
<keyword id="KW-0540">Nuclease</keyword>
<keyword id="KW-1185">Reference proteome</keyword>
<gene>
    <name evidence="1" type="primary">tatD</name>
    <name type="ordered locus">STM3976</name>
</gene>
<accession>Q9L6M2</accession>
<organism>
    <name type="scientific">Salmonella typhimurium (strain LT2 / SGSC1412 / ATCC 700720)</name>
    <dbReference type="NCBI Taxonomy" id="99287"/>
    <lineage>
        <taxon>Bacteria</taxon>
        <taxon>Pseudomonadati</taxon>
        <taxon>Pseudomonadota</taxon>
        <taxon>Gammaproteobacteria</taxon>
        <taxon>Enterobacterales</taxon>
        <taxon>Enterobacteriaceae</taxon>
        <taxon>Salmonella</taxon>
    </lineage>
</organism>
<proteinExistence type="inferred from homology"/>
<reference key="1">
    <citation type="journal article" date="2001" name="Nature">
        <title>Complete genome sequence of Salmonella enterica serovar Typhimurium LT2.</title>
        <authorList>
            <person name="McClelland M."/>
            <person name="Sanderson K.E."/>
            <person name="Spieth J."/>
            <person name="Clifton S.W."/>
            <person name="Latreille P."/>
            <person name="Courtney L."/>
            <person name="Porwollik S."/>
            <person name="Ali J."/>
            <person name="Dante M."/>
            <person name="Du F."/>
            <person name="Hou S."/>
            <person name="Layman D."/>
            <person name="Leonard S."/>
            <person name="Nguyen C."/>
            <person name="Scott K."/>
            <person name="Holmes A."/>
            <person name="Grewal N."/>
            <person name="Mulvaney E."/>
            <person name="Ryan E."/>
            <person name="Sun H."/>
            <person name="Florea L."/>
            <person name="Miller W."/>
            <person name="Stoneking T."/>
            <person name="Nhan M."/>
            <person name="Waterston R."/>
            <person name="Wilson R.K."/>
        </authorList>
    </citation>
    <scope>NUCLEOTIDE SEQUENCE [LARGE SCALE GENOMIC DNA]</scope>
    <source>
        <strain>LT2 / SGSC1412 / ATCC 700720</strain>
    </source>
</reference>
<dbReference type="EC" id="3.1.11.-" evidence="1"/>
<dbReference type="EC" id="3.1.13.-" evidence="1"/>
<dbReference type="EMBL" id="AE006468">
    <property type="protein sequence ID" value="AAL22820.1"/>
    <property type="molecule type" value="Genomic_DNA"/>
</dbReference>
<dbReference type="RefSeq" id="WP_000459635.1">
    <property type="nucleotide sequence ID" value="NC_003197.2"/>
</dbReference>
<dbReference type="SMR" id="Q9L6M2"/>
<dbReference type="STRING" id="99287.STM3976"/>
<dbReference type="PaxDb" id="99287-STM3976"/>
<dbReference type="KEGG" id="stm:STM3976"/>
<dbReference type="HOGENOM" id="CLU_031506_1_2_6"/>
<dbReference type="PhylomeDB" id="Q9L6M2"/>
<dbReference type="BioCyc" id="SENT99287:STM3976-MONOMER"/>
<dbReference type="Proteomes" id="UP000001014">
    <property type="component" value="Chromosome"/>
</dbReference>
<dbReference type="GO" id="GO:0005737">
    <property type="term" value="C:cytoplasm"/>
    <property type="evidence" value="ECO:0007669"/>
    <property type="project" value="UniProtKB-SubCell"/>
</dbReference>
<dbReference type="GO" id="GO:0000175">
    <property type="term" value="F:3'-5'-RNA exonuclease activity"/>
    <property type="evidence" value="ECO:0007669"/>
    <property type="project" value="UniProtKB-UniRule"/>
</dbReference>
<dbReference type="GO" id="GO:0000287">
    <property type="term" value="F:magnesium ion binding"/>
    <property type="evidence" value="ECO:0007669"/>
    <property type="project" value="UniProtKB-UniRule"/>
</dbReference>
<dbReference type="GO" id="GO:0008310">
    <property type="term" value="F:single-stranded DNA 3'-5' DNA exonuclease activity"/>
    <property type="evidence" value="ECO:0007669"/>
    <property type="project" value="UniProtKB-UniRule"/>
</dbReference>
<dbReference type="CDD" id="cd01310">
    <property type="entry name" value="TatD_DNAse"/>
    <property type="match status" value="1"/>
</dbReference>
<dbReference type="FunFam" id="3.20.20.140:FF:000018">
    <property type="entry name" value="3'-5' ssDNA/RNA exonuclease TatD"/>
    <property type="match status" value="1"/>
</dbReference>
<dbReference type="Gene3D" id="3.20.20.140">
    <property type="entry name" value="Metal-dependent hydrolases"/>
    <property type="match status" value="1"/>
</dbReference>
<dbReference type="HAMAP" id="MF_00901">
    <property type="entry name" value="TatD_exonuclease"/>
    <property type="match status" value="1"/>
</dbReference>
<dbReference type="InterPro" id="IPR018228">
    <property type="entry name" value="DNase_TatD-rel_CS"/>
</dbReference>
<dbReference type="InterPro" id="IPR024918">
    <property type="entry name" value="Exonuc_TatD"/>
</dbReference>
<dbReference type="InterPro" id="IPR032466">
    <property type="entry name" value="Metal_Hydrolase"/>
</dbReference>
<dbReference type="InterPro" id="IPR001130">
    <property type="entry name" value="TatD-like"/>
</dbReference>
<dbReference type="InterPro" id="IPR050891">
    <property type="entry name" value="TatD-type_Hydrolase"/>
</dbReference>
<dbReference type="NCBIfam" id="NF007745">
    <property type="entry name" value="PRK10425.1"/>
    <property type="match status" value="1"/>
</dbReference>
<dbReference type="PANTHER" id="PTHR10060:SF15">
    <property type="entry name" value="DEOXYRIBONUCLEASE TATDN1"/>
    <property type="match status" value="1"/>
</dbReference>
<dbReference type="PANTHER" id="PTHR10060">
    <property type="entry name" value="TATD FAMILY DEOXYRIBONUCLEASE"/>
    <property type="match status" value="1"/>
</dbReference>
<dbReference type="Pfam" id="PF01026">
    <property type="entry name" value="TatD_DNase"/>
    <property type="match status" value="1"/>
</dbReference>
<dbReference type="PIRSF" id="PIRSF005902">
    <property type="entry name" value="DNase_TatD"/>
    <property type="match status" value="1"/>
</dbReference>
<dbReference type="SUPFAM" id="SSF51556">
    <property type="entry name" value="Metallo-dependent hydrolases"/>
    <property type="match status" value="1"/>
</dbReference>
<dbReference type="PROSITE" id="PS01090">
    <property type="entry name" value="TATD_2"/>
    <property type="match status" value="1"/>
</dbReference>
<dbReference type="PROSITE" id="PS01091">
    <property type="entry name" value="TATD_3"/>
    <property type="match status" value="1"/>
</dbReference>
<evidence type="ECO:0000255" key="1">
    <source>
        <dbReference type="HAMAP-Rule" id="MF_00901"/>
    </source>
</evidence>
<name>TATD_SALTY</name>
<feature type="chain" id="PRO_0000412751" description="3'-5' ssDNA/RNA exonuclease TatD">
    <location>
        <begin position="1"/>
        <end position="260"/>
    </location>
</feature>
<feature type="binding site" evidence="1">
    <location>
        <position position="91"/>
    </location>
    <ligand>
        <name>a divalent metal cation</name>
        <dbReference type="ChEBI" id="CHEBI:60240"/>
    </ligand>
</feature>
<feature type="binding site" evidence="1">
    <location>
        <position position="127"/>
    </location>
    <ligand>
        <name>a divalent metal cation</name>
        <dbReference type="ChEBI" id="CHEBI:60240"/>
    </ligand>
</feature>
<feature type="binding site" evidence="1">
    <location>
        <position position="152"/>
    </location>
    <ligand>
        <name>a divalent metal cation</name>
        <dbReference type="ChEBI" id="CHEBI:60240"/>
    </ligand>
</feature>
<protein>
    <recommendedName>
        <fullName evidence="1">3'-5' ssDNA/RNA exonuclease TatD</fullName>
        <ecNumber evidence="1">3.1.11.-</ecNumber>
        <ecNumber evidence="1">3.1.13.-</ecNumber>
    </recommendedName>
    <alternativeName>
        <fullName evidence="1">DNase TatD</fullName>
    </alternativeName>
</protein>
<comment type="function">
    <text evidence="1">3'-5' exonuclease that prefers single-stranded DNA and RNA. May play a role in the H(2)O(2)-induced DNA damage repair.</text>
</comment>
<comment type="cofactor">
    <cofactor evidence="1">
        <name>Mg(2+)</name>
        <dbReference type="ChEBI" id="CHEBI:18420"/>
    </cofactor>
</comment>
<comment type="subunit">
    <text evidence="1">Monomer.</text>
</comment>
<comment type="subcellular location">
    <subcellularLocation>
        <location evidence="1">Cytoplasm</location>
    </subcellularLocation>
</comment>
<comment type="similarity">
    <text evidence="1">Belongs to the metallo-dependent hydrolases superfamily. TatD-type hydrolase family. TatD subfamily.</text>
</comment>